<accession>A1CRK9</accession>
<dbReference type="EC" id="1.6.2.2"/>
<dbReference type="EMBL" id="DS027059">
    <property type="protein sequence ID" value="EAW08280.1"/>
    <property type="molecule type" value="Genomic_DNA"/>
</dbReference>
<dbReference type="RefSeq" id="XP_001269706.1">
    <property type="nucleotide sequence ID" value="XM_001269705.1"/>
</dbReference>
<dbReference type="SMR" id="A1CRK9"/>
<dbReference type="STRING" id="344612.A1CRK9"/>
<dbReference type="EnsemblFungi" id="EAW08280">
    <property type="protein sequence ID" value="EAW08280"/>
    <property type="gene ID" value="ACLA_030130"/>
</dbReference>
<dbReference type="GeneID" id="4701749"/>
<dbReference type="KEGG" id="act:ACLA_030130"/>
<dbReference type="VEuPathDB" id="FungiDB:ACLA_030130"/>
<dbReference type="eggNOG" id="KOG0534">
    <property type="taxonomic scope" value="Eukaryota"/>
</dbReference>
<dbReference type="HOGENOM" id="CLU_003827_9_1_1"/>
<dbReference type="OMA" id="KGPEMQK"/>
<dbReference type="OrthoDB" id="432685at2759"/>
<dbReference type="Proteomes" id="UP000006701">
    <property type="component" value="Unassembled WGS sequence"/>
</dbReference>
<dbReference type="GO" id="GO:0005741">
    <property type="term" value="C:mitochondrial outer membrane"/>
    <property type="evidence" value="ECO:0007669"/>
    <property type="project" value="UniProtKB-SubCell"/>
</dbReference>
<dbReference type="GO" id="GO:0004128">
    <property type="term" value="F:cytochrome-b5 reductase activity, acting on NAD(P)H"/>
    <property type="evidence" value="ECO:0007669"/>
    <property type="project" value="UniProtKB-EC"/>
</dbReference>
<dbReference type="GO" id="GO:0006696">
    <property type="term" value="P:ergosterol biosynthetic process"/>
    <property type="evidence" value="ECO:0007669"/>
    <property type="project" value="TreeGrafter"/>
</dbReference>
<dbReference type="CDD" id="cd06183">
    <property type="entry name" value="cyt_b5_reduct_like"/>
    <property type="match status" value="1"/>
</dbReference>
<dbReference type="FunFam" id="2.40.30.10:FF:000032">
    <property type="entry name" value="NADH-cytochrome b5 reductase"/>
    <property type="match status" value="1"/>
</dbReference>
<dbReference type="FunFam" id="3.40.50.80:FF:000009">
    <property type="entry name" value="NADH-cytochrome b5 reductase"/>
    <property type="match status" value="1"/>
</dbReference>
<dbReference type="Gene3D" id="3.40.50.80">
    <property type="entry name" value="Nucleotide-binding domain of ferredoxin-NADP reductase (FNR) module"/>
    <property type="match status" value="1"/>
</dbReference>
<dbReference type="Gene3D" id="2.40.30.10">
    <property type="entry name" value="Translation factors"/>
    <property type="match status" value="1"/>
</dbReference>
<dbReference type="InterPro" id="IPR001834">
    <property type="entry name" value="CBR-like"/>
</dbReference>
<dbReference type="InterPro" id="IPR008333">
    <property type="entry name" value="Cbr1-like_FAD-bd_dom"/>
</dbReference>
<dbReference type="InterPro" id="IPR017927">
    <property type="entry name" value="FAD-bd_FR_type"/>
</dbReference>
<dbReference type="InterPro" id="IPR001709">
    <property type="entry name" value="Flavoprot_Pyr_Nucl_cyt_Rdtase"/>
</dbReference>
<dbReference type="InterPro" id="IPR039261">
    <property type="entry name" value="FNR_nucleotide-bd"/>
</dbReference>
<dbReference type="InterPro" id="IPR001433">
    <property type="entry name" value="OxRdtase_FAD/NAD-bd"/>
</dbReference>
<dbReference type="InterPro" id="IPR017938">
    <property type="entry name" value="Riboflavin_synthase-like_b-brl"/>
</dbReference>
<dbReference type="PANTHER" id="PTHR19370">
    <property type="entry name" value="NADH-CYTOCHROME B5 REDUCTASE"/>
    <property type="match status" value="1"/>
</dbReference>
<dbReference type="PANTHER" id="PTHR19370:SF171">
    <property type="entry name" value="NADH-CYTOCHROME B5 REDUCTASE 2"/>
    <property type="match status" value="1"/>
</dbReference>
<dbReference type="Pfam" id="PF00970">
    <property type="entry name" value="FAD_binding_6"/>
    <property type="match status" value="1"/>
</dbReference>
<dbReference type="Pfam" id="PF00175">
    <property type="entry name" value="NAD_binding_1"/>
    <property type="match status" value="1"/>
</dbReference>
<dbReference type="PRINTS" id="PR00406">
    <property type="entry name" value="CYTB5RDTASE"/>
</dbReference>
<dbReference type="PRINTS" id="PR00371">
    <property type="entry name" value="FPNCR"/>
</dbReference>
<dbReference type="SUPFAM" id="SSF52343">
    <property type="entry name" value="Ferredoxin reductase-like, C-terminal NADP-linked domain"/>
    <property type="match status" value="1"/>
</dbReference>
<dbReference type="SUPFAM" id="SSF63380">
    <property type="entry name" value="Riboflavin synthase domain-like"/>
    <property type="match status" value="1"/>
</dbReference>
<dbReference type="PROSITE" id="PS51384">
    <property type="entry name" value="FAD_FR"/>
    <property type="match status" value="1"/>
</dbReference>
<sequence length="322" mass="36040">MFARQPLRFAQPLKQGFRKYSTEAPAKGKSSLAPIYISVGLAGLGVGLYRYSTASAETPVVDRPKVFTGGEQGWVDLKLSEIENLSHNTKRLRFEFADKEAVSGLQVASALLTKFKPAEGKPVIRPYTPVSDEDQPGYLDLVVKVYPNGPMSEHLHSMNVDQRLEFKGPIPKYPWETNKHKHICLIAGGTGITPMYQLARQIFKNPEDQTKVTLVFGNVSEEDILLKKELQELENTHPRRFKAFYVLDNPPKEWTGGKGYVTKELLKTVLPEPKEEDIKIFVCGPPGMYKAISGPKVSPKDQGELTGLLAELGYNKDQVYKF</sequence>
<keyword id="KW-0274">FAD</keyword>
<keyword id="KW-0285">Flavoprotein</keyword>
<keyword id="KW-0472">Membrane</keyword>
<keyword id="KW-0496">Mitochondrion</keyword>
<keyword id="KW-1000">Mitochondrion outer membrane</keyword>
<keyword id="KW-0520">NAD</keyword>
<keyword id="KW-0560">Oxidoreductase</keyword>
<keyword id="KW-1185">Reference proteome</keyword>
<keyword id="KW-0812">Transmembrane</keyword>
<keyword id="KW-1133">Transmembrane helix</keyword>
<organism>
    <name type="scientific">Aspergillus clavatus (strain ATCC 1007 / CBS 513.65 / DSM 816 / NCTC 3887 / NRRL 1 / QM 1276 / 107)</name>
    <dbReference type="NCBI Taxonomy" id="344612"/>
    <lineage>
        <taxon>Eukaryota</taxon>
        <taxon>Fungi</taxon>
        <taxon>Dikarya</taxon>
        <taxon>Ascomycota</taxon>
        <taxon>Pezizomycotina</taxon>
        <taxon>Eurotiomycetes</taxon>
        <taxon>Eurotiomycetidae</taxon>
        <taxon>Eurotiales</taxon>
        <taxon>Aspergillaceae</taxon>
        <taxon>Aspergillus</taxon>
        <taxon>Aspergillus subgen. Fumigati</taxon>
    </lineage>
</organism>
<gene>
    <name type="primary">mcr1</name>
    <name type="ORF">ACLA_030130</name>
</gene>
<protein>
    <recommendedName>
        <fullName>NADH-cytochrome b5 reductase 2</fullName>
        <ecNumber>1.6.2.2</ecNumber>
    </recommendedName>
    <alternativeName>
        <fullName>Mitochondrial cytochrome b reductase</fullName>
    </alternativeName>
</protein>
<reference key="1">
    <citation type="journal article" date="2008" name="PLoS Genet.">
        <title>Genomic islands in the pathogenic filamentous fungus Aspergillus fumigatus.</title>
        <authorList>
            <person name="Fedorova N.D."/>
            <person name="Khaldi N."/>
            <person name="Joardar V.S."/>
            <person name="Maiti R."/>
            <person name="Amedeo P."/>
            <person name="Anderson M.J."/>
            <person name="Crabtree J."/>
            <person name="Silva J.C."/>
            <person name="Badger J.H."/>
            <person name="Albarraq A."/>
            <person name="Angiuoli S."/>
            <person name="Bussey H."/>
            <person name="Bowyer P."/>
            <person name="Cotty P.J."/>
            <person name="Dyer P.S."/>
            <person name="Egan A."/>
            <person name="Galens K."/>
            <person name="Fraser-Liggett C.M."/>
            <person name="Haas B.J."/>
            <person name="Inman J.M."/>
            <person name="Kent R."/>
            <person name="Lemieux S."/>
            <person name="Malavazi I."/>
            <person name="Orvis J."/>
            <person name="Roemer T."/>
            <person name="Ronning C.M."/>
            <person name="Sundaram J.P."/>
            <person name="Sutton G."/>
            <person name="Turner G."/>
            <person name="Venter J.C."/>
            <person name="White O.R."/>
            <person name="Whitty B.R."/>
            <person name="Youngman P."/>
            <person name="Wolfe K.H."/>
            <person name="Goldman G.H."/>
            <person name="Wortman J.R."/>
            <person name="Jiang B."/>
            <person name="Denning D.W."/>
            <person name="Nierman W.C."/>
        </authorList>
    </citation>
    <scope>NUCLEOTIDE SEQUENCE [LARGE SCALE GENOMIC DNA]</scope>
    <source>
        <strain>ATCC 1007 / CBS 513.65 / DSM 816 / NCTC 3887 / NRRL 1 / QM 1276 / 107</strain>
    </source>
</reference>
<proteinExistence type="inferred from homology"/>
<name>MCR1_ASPCL</name>
<feature type="chain" id="PRO_0000330170" description="NADH-cytochrome b5 reductase 2">
    <location>
        <begin position="1"/>
        <end position="322"/>
    </location>
</feature>
<feature type="transmembrane region" description="Helical" evidence="2">
    <location>
        <begin position="32"/>
        <end position="48"/>
    </location>
</feature>
<feature type="domain" description="FAD-binding FR-type" evidence="3">
    <location>
        <begin position="72"/>
        <end position="176"/>
    </location>
</feature>
<feature type="binding site" evidence="1">
    <location>
        <begin position="179"/>
        <end position="214"/>
    </location>
    <ligand>
        <name>FAD</name>
        <dbReference type="ChEBI" id="CHEBI:57692"/>
    </ligand>
</feature>
<comment type="function">
    <text evidence="1">May mediate the reduction of outer membrane cytochrome b5.</text>
</comment>
<comment type="catalytic activity">
    <reaction>
        <text>2 Fe(III)-[cytochrome b5] + NADH = 2 Fe(II)-[cytochrome b5] + NAD(+) + H(+)</text>
        <dbReference type="Rhea" id="RHEA:46680"/>
        <dbReference type="Rhea" id="RHEA-COMP:10438"/>
        <dbReference type="Rhea" id="RHEA-COMP:10439"/>
        <dbReference type="ChEBI" id="CHEBI:15378"/>
        <dbReference type="ChEBI" id="CHEBI:29033"/>
        <dbReference type="ChEBI" id="CHEBI:29034"/>
        <dbReference type="ChEBI" id="CHEBI:57540"/>
        <dbReference type="ChEBI" id="CHEBI:57945"/>
        <dbReference type="EC" id="1.6.2.2"/>
    </reaction>
</comment>
<comment type="cofactor">
    <cofactor evidence="1">
        <name>FAD</name>
        <dbReference type="ChEBI" id="CHEBI:57692"/>
    </cofactor>
</comment>
<comment type="subcellular location">
    <subcellularLocation>
        <location evidence="1">Mitochondrion outer membrane</location>
        <topology evidence="1">Single-pass membrane protein</topology>
    </subcellularLocation>
</comment>
<comment type="similarity">
    <text evidence="4">Belongs to the flavoprotein pyridine nucleotide cytochrome reductase family.</text>
</comment>
<evidence type="ECO:0000250" key="1"/>
<evidence type="ECO:0000255" key="2"/>
<evidence type="ECO:0000255" key="3">
    <source>
        <dbReference type="PROSITE-ProRule" id="PRU00716"/>
    </source>
</evidence>
<evidence type="ECO:0000305" key="4"/>